<protein>
    <recommendedName>
        <fullName>Aquaporin PIP2-1</fullName>
    </recommendedName>
    <alternativeName>
        <fullName>Plasma membrane intrinsic protein 2-1</fullName>
    </alternativeName>
    <alternativeName>
        <fullName>ZmPIP2-1</fullName>
    </alternativeName>
    <alternativeName>
        <fullName>ZmPIP2;1</fullName>
    </alternativeName>
</protein>
<keyword id="KW-1003">Cell membrane</keyword>
<keyword id="KW-0472">Membrane</keyword>
<keyword id="KW-1185">Reference proteome</keyword>
<keyword id="KW-0677">Repeat</keyword>
<keyword id="KW-0812">Transmembrane</keyword>
<keyword id="KW-1133">Transmembrane helix</keyword>
<keyword id="KW-0813">Transport</keyword>
<reference key="1">
    <citation type="journal article" date="2001" name="Plant Physiol.">
        <title>Aquaporins constitute a large and highly divergent protein family in maize.</title>
        <authorList>
            <person name="Chaumont F."/>
            <person name="Barrieu F."/>
            <person name="Wojcik E."/>
            <person name="Chrispeels M.J."/>
            <person name="Jung R."/>
        </authorList>
    </citation>
    <scope>NUCLEOTIDE SEQUENCE [MRNA]</scope>
    <scope>GENE FAMILY</scope>
    <scope>NOMENCLATURE</scope>
    <source>
        <strain>cv. B73</strain>
    </source>
</reference>
<reference key="2">
    <citation type="journal article" date="2003" name="Plant Cell Physiol.">
        <title>Diurnal regulation of water transport and aquaporin gene expression in maize roots: contribution of PIP2 proteins.</title>
        <authorList>
            <person name="Lopez F."/>
            <person name="Bousser A."/>
            <person name="Sissoeff I."/>
            <person name="Gaspar M."/>
            <person name="Lachaise B."/>
            <person name="Hoarau J."/>
            <person name="Mahe A."/>
        </authorList>
    </citation>
    <scope>NUCLEOTIDE SEQUENCE [MRNA]</scope>
    <scope>TISSUE SPECIFICITY</scope>
    <scope>INDUCTION</scope>
    <source>
        <tissue>Root</tissue>
    </source>
</reference>
<reference key="3">
    <citation type="journal article" date="2004" name="Plant Cell">
        <title>Interactions between plasma membrane aquaporins modulate their water channel activity.</title>
        <authorList>
            <person name="Fetter K."/>
            <person name="van Wilder V."/>
            <person name="Moshelion M."/>
            <person name="Chaumont F."/>
        </authorList>
    </citation>
    <scope>FUNCTION</scope>
    <scope>SUBUNIT</scope>
    <scope>INTERACTION WITH PIP1-2</scope>
</reference>
<accession>Q84RL7</accession>
<accession>Q9ATM9</accession>
<evidence type="ECO:0000250" key="1"/>
<evidence type="ECO:0000255" key="2"/>
<evidence type="ECO:0000256" key="3">
    <source>
        <dbReference type="SAM" id="MobiDB-lite"/>
    </source>
</evidence>
<evidence type="ECO:0000269" key="4">
    <source>
    </source>
</evidence>
<evidence type="ECO:0000269" key="5">
    <source>
    </source>
</evidence>
<evidence type="ECO:0000305" key="6"/>
<gene>
    <name type="primary">PIP2-1</name>
</gene>
<dbReference type="EMBL" id="AF326491">
    <property type="protein sequence ID" value="AAK26758.1"/>
    <property type="molecule type" value="mRNA"/>
</dbReference>
<dbReference type="EMBL" id="AY243801">
    <property type="protein sequence ID" value="AAO86707.1"/>
    <property type="molecule type" value="mRNA"/>
</dbReference>
<dbReference type="RefSeq" id="NP_001105024.1">
    <property type="nucleotide sequence ID" value="NM_001111554.2"/>
</dbReference>
<dbReference type="SMR" id="Q84RL7"/>
<dbReference type="FunCoup" id="Q84RL7">
    <property type="interactions" value="321"/>
</dbReference>
<dbReference type="STRING" id="4577.Q84RL7"/>
<dbReference type="ProMEX" id="Q84RL7"/>
<dbReference type="EnsemblPlants" id="Zm00001eb306380_T001">
    <property type="protein sequence ID" value="Zm00001eb306380_P001"/>
    <property type="gene ID" value="Zm00001eb306380"/>
</dbReference>
<dbReference type="GeneID" id="541888"/>
<dbReference type="Gramene" id="Zm00001eb306380_T001">
    <property type="protein sequence ID" value="Zm00001eb306380_P001"/>
    <property type="gene ID" value="Zm00001eb306380"/>
</dbReference>
<dbReference type="KEGG" id="zma:541888"/>
<dbReference type="HOGENOM" id="CLU_020019_3_0_1"/>
<dbReference type="InParanoid" id="Q84RL7"/>
<dbReference type="OMA" id="LFITIAW"/>
<dbReference type="OrthoDB" id="3222at2759"/>
<dbReference type="Proteomes" id="UP000007305">
    <property type="component" value="Chromosome 7"/>
</dbReference>
<dbReference type="ExpressionAtlas" id="Q84RL7">
    <property type="expression patterns" value="baseline and differential"/>
</dbReference>
<dbReference type="GO" id="GO:0016020">
    <property type="term" value="C:membrane"/>
    <property type="evidence" value="ECO:0000304"/>
    <property type="project" value="AgBase"/>
</dbReference>
<dbReference type="GO" id="GO:0005886">
    <property type="term" value="C:plasma membrane"/>
    <property type="evidence" value="ECO:0000314"/>
    <property type="project" value="AgBase"/>
</dbReference>
<dbReference type="GO" id="GO:0032991">
    <property type="term" value="C:protein-containing complex"/>
    <property type="evidence" value="ECO:0000304"/>
    <property type="project" value="AgBase"/>
</dbReference>
<dbReference type="GO" id="GO:0015250">
    <property type="term" value="F:water channel activity"/>
    <property type="evidence" value="ECO:0000318"/>
    <property type="project" value="GO_Central"/>
</dbReference>
<dbReference type="GO" id="GO:0051290">
    <property type="term" value="P:protein heterotetramerization"/>
    <property type="evidence" value="ECO:0000304"/>
    <property type="project" value="AgBase"/>
</dbReference>
<dbReference type="GO" id="GO:0051289">
    <property type="term" value="P:protein homotetramerization"/>
    <property type="evidence" value="ECO:0000304"/>
    <property type="project" value="AgBase"/>
</dbReference>
<dbReference type="CDD" id="cd00333">
    <property type="entry name" value="MIP"/>
    <property type="match status" value="1"/>
</dbReference>
<dbReference type="FunFam" id="1.20.1080.10:FF:000001">
    <property type="entry name" value="Probable aquaporin PIP1-2"/>
    <property type="match status" value="1"/>
</dbReference>
<dbReference type="Gene3D" id="1.20.1080.10">
    <property type="entry name" value="Glycerol uptake facilitator protein"/>
    <property type="match status" value="1"/>
</dbReference>
<dbReference type="InterPro" id="IPR023271">
    <property type="entry name" value="Aquaporin-like"/>
</dbReference>
<dbReference type="InterPro" id="IPR034294">
    <property type="entry name" value="Aquaporin_transptr"/>
</dbReference>
<dbReference type="InterPro" id="IPR000425">
    <property type="entry name" value="MIP"/>
</dbReference>
<dbReference type="InterPro" id="IPR022357">
    <property type="entry name" value="MIP_CS"/>
</dbReference>
<dbReference type="NCBIfam" id="TIGR00861">
    <property type="entry name" value="MIP"/>
    <property type="match status" value="1"/>
</dbReference>
<dbReference type="PANTHER" id="PTHR45687">
    <property type="entry name" value="AQUAPORIN OR AQUAGLYCEROPORIN RELATED"/>
    <property type="match status" value="1"/>
</dbReference>
<dbReference type="Pfam" id="PF00230">
    <property type="entry name" value="MIP"/>
    <property type="match status" value="1"/>
</dbReference>
<dbReference type="PRINTS" id="PR00783">
    <property type="entry name" value="MINTRINSICP"/>
</dbReference>
<dbReference type="SUPFAM" id="SSF81338">
    <property type="entry name" value="Aquaporin-like"/>
    <property type="match status" value="1"/>
</dbReference>
<dbReference type="PROSITE" id="PS00221">
    <property type="entry name" value="MIP"/>
    <property type="match status" value="1"/>
</dbReference>
<proteinExistence type="evidence at protein level"/>
<feature type="chain" id="PRO_0000286018" description="Aquaporin PIP2-1">
    <location>
        <begin position="1"/>
        <end position="290"/>
    </location>
</feature>
<feature type="transmembrane region" description="Helical; Name=1" evidence="2">
    <location>
        <begin position="43"/>
        <end position="63"/>
    </location>
</feature>
<feature type="transmembrane region" description="Helical; Name=2" evidence="2">
    <location>
        <begin position="80"/>
        <end position="100"/>
    </location>
</feature>
<feature type="transmembrane region" description="Helical; Name=3" evidence="2">
    <location>
        <begin position="131"/>
        <end position="151"/>
    </location>
</feature>
<feature type="transmembrane region" description="Helical; Name=4" evidence="2">
    <location>
        <begin position="173"/>
        <end position="193"/>
    </location>
</feature>
<feature type="transmembrane region" description="Helical; Name=5" evidence="2">
    <location>
        <begin position="205"/>
        <end position="225"/>
    </location>
</feature>
<feature type="transmembrane region" description="Helical; Name=6" evidence="2">
    <location>
        <begin position="255"/>
        <end position="275"/>
    </location>
</feature>
<feature type="region of interest" description="Disordered" evidence="3">
    <location>
        <begin position="1"/>
        <end position="20"/>
    </location>
</feature>
<feature type="short sequence motif" description="NPA 1" evidence="1">
    <location>
        <begin position="112"/>
        <end position="114"/>
    </location>
</feature>
<feature type="short sequence motif" description="NPA 2" evidence="1">
    <location>
        <begin position="233"/>
        <end position="235"/>
    </location>
</feature>
<feature type="sequence conflict" description="In Ref. 2; AAO86707." evidence="6" ref="2">
    <original>L</original>
    <variation>F</variation>
    <location>
        <position position="176"/>
    </location>
</feature>
<name>PIP21_MAIZE</name>
<organism>
    <name type="scientific">Zea mays</name>
    <name type="common">Maize</name>
    <dbReference type="NCBI Taxonomy" id="4577"/>
    <lineage>
        <taxon>Eukaryota</taxon>
        <taxon>Viridiplantae</taxon>
        <taxon>Streptophyta</taxon>
        <taxon>Embryophyta</taxon>
        <taxon>Tracheophyta</taxon>
        <taxon>Spermatophyta</taxon>
        <taxon>Magnoliopsida</taxon>
        <taxon>Liliopsida</taxon>
        <taxon>Poales</taxon>
        <taxon>Poaceae</taxon>
        <taxon>PACMAD clade</taxon>
        <taxon>Panicoideae</taxon>
        <taxon>Andropogonodae</taxon>
        <taxon>Andropogoneae</taxon>
        <taxon>Tripsacinae</taxon>
        <taxon>Zea</taxon>
    </lineage>
</organism>
<comment type="function">
    <text evidence="4">Water channel required to facilitate the transport of water across cell membrane. Active as homomers. Increased activity when heteromerization with PIP1-2.</text>
</comment>
<comment type="subunit">
    <text evidence="4">Homomers. Can interact with PIP1-2 to form heteromers.</text>
</comment>
<comment type="subcellular location">
    <subcellularLocation>
        <location evidence="1">Cell membrane</location>
        <topology evidence="1">Multi-pass membrane protein</topology>
    </subcellularLocation>
</comment>
<comment type="tissue specificity">
    <text evidence="5">Expressed in roots.</text>
</comment>
<comment type="induction">
    <text evidence="5">Expressed in roots with a circadian rhythm showing an increase at the end of the night period, a peak during the first part of the light period and then a decrease.</text>
</comment>
<comment type="domain">
    <text>Aquaporins contain two tandem repeats each containing three membrane-spanning domains and a pore-forming loop with the signature motif Asn-Pro-Ala (NPA).</text>
</comment>
<comment type="similarity">
    <text evidence="6">Belongs to the MIP/aquaporin (TC 1.A.8) family. PIP (TC 1.A.8.11) subfamily.</text>
</comment>
<sequence length="290" mass="30215">MGKDDVIESGAGGGEFAAKDYTDPPPAPLIDAAELGSWSLYRAVIAEFIATLLFLYITVATVIGYKHQTDASASGADAACGGVGVLGIAWAFGGMIFVLVYCTAGISGGHINPAVTFGLFLARKVSLVRALLYIVAQCLGAICGVGLVKAFQSAYFDRYGGGANSLASGYSRGTGLGAEIIGTFVLVYTVFSATDPKRNARDSHVPVLAPLPIGFAVFMVHLATIPVTGTGINPARSLGAAVIYNKDKPWDDHWIFWVGPLVGAAIAAFYHQYILRAGAIKALGSFRSNA</sequence>